<name>NB_PSECP</name>
<dbReference type="EC" id="5.99.-.-" evidence="1"/>
<dbReference type="EMBL" id="CP001341">
    <property type="protein sequence ID" value="ACL40686.1"/>
    <property type="molecule type" value="Genomic_DNA"/>
</dbReference>
<dbReference type="RefSeq" id="WP_015937882.1">
    <property type="nucleotide sequence ID" value="NC_011886.1"/>
</dbReference>
<dbReference type="SMR" id="B8HD40"/>
<dbReference type="STRING" id="452863.Achl_2721"/>
<dbReference type="KEGG" id="ach:Achl_2721"/>
<dbReference type="eggNOG" id="COG3485">
    <property type="taxonomic scope" value="Bacteria"/>
</dbReference>
<dbReference type="HOGENOM" id="CLU_085483_0_1_11"/>
<dbReference type="OrthoDB" id="4804006at2"/>
<dbReference type="Proteomes" id="UP000002505">
    <property type="component" value="Chromosome"/>
</dbReference>
<dbReference type="GO" id="GO:0020037">
    <property type="term" value="F:heme binding"/>
    <property type="evidence" value="ECO:0007669"/>
    <property type="project" value="UniProtKB-UniRule"/>
</dbReference>
<dbReference type="GO" id="GO:0046872">
    <property type="term" value="F:metal ion binding"/>
    <property type="evidence" value="ECO:0007669"/>
    <property type="project" value="UniProtKB-KW"/>
</dbReference>
<dbReference type="GO" id="GO:0062213">
    <property type="term" value="F:peroxynitrite isomerase activity"/>
    <property type="evidence" value="ECO:0007669"/>
    <property type="project" value="UniProtKB-UniRule"/>
</dbReference>
<dbReference type="CDD" id="cd07828">
    <property type="entry name" value="lipocalin_heme-bd-THAP4-like"/>
    <property type="match status" value="1"/>
</dbReference>
<dbReference type="Gene3D" id="2.40.128.20">
    <property type="match status" value="1"/>
</dbReference>
<dbReference type="HAMAP" id="MF_01297">
    <property type="entry name" value="nitrobindin"/>
    <property type="match status" value="1"/>
</dbReference>
<dbReference type="InterPro" id="IPR012674">
    <property type="entry name" value="Calycin"/>
</dbReference>
<dbReference type="InterPro" id="IPR022939">
    <property type="entry name" value="Nb(III)_bact/plant"/>
</dbReference>
<dbReference type="InterPro" id="IPR045165">
    <property type="entry name" value="Nitrobindin"/>
</dbReference>
<dbReference type="InterPro" id="IPR014878">
    <property type="entry name" value="THAP4-like_heme-bd"/>
</dbReference>
<dbReference type="PANTHER" id="PTHR15854:SF4">
    <property type="entry name" value="PEROXYNITRITE ISOMERASE THAP4"/>
    <property type="match status" value="1"/>
</dbReference>
<dbReference type="PANTHER" id="PTHR15854">
    <property type="entry name" value="THAP4 PROTEIN"/>
    <property type="match status" value="1"/>
</dbReference>
<dbReference type="Pfam" id="PF08768">
    <property type="entry name" value="THAP4_heme-bd"/>
    <property type="match status" value="1"/>
</dbReference>
<dbReference type="SUPFAM" id="SSF50814">
    <property type="entry name" value="Lipocalins"/>
    <property type="match status" value="1"/>
</dbReference>
<comment type="function">
    <text evidence="1">Heme-binding protein able to scavenge peroxynitrite and to protect free L-tyrosine against peroxynitrite-mediated nitration, by acting as a peroxynitrite isomerase that converts peroxynitrite to nitrate. Therefore, this protein likely plays a role in peroxynitrite sensing and in the detoxification of reactive nitrogen and oxygen species (RNS and ROS, respectively). Is able to bind nitric oxide (NO) in vitro, but may act as a sensor of peroxynitrite levels in vivo.</text>
</comment>
<comment type="catalytic activity">
    <reaction evidence="1">
        <text>peroxynitrite = nitrate</text>
        <dbReference type="Rhea" id="RHEA:63116"/>
        <dbReference type="ChEBI" id="CHEBI:17632"/>
        <dbReference type="ChEBI" id="CHEBI:25941"/>
    </reaction>
    <physiologicalReaction direction="left-to-right" evidence="1">
        <dbReference type="Rhea" id="RHEA:63117"/>
    </physiologicalReaction>
</comment>
<comment type="cofactor">
    <cofactor evidence="1">
        <name>heme b</name>
        <dbReference type="ChEBI" id="CHEBI:60344"/>
    </cofactor>
    <text evidence="1">Binds 1 heme b group per subunit, that coordinates a highly solvent-exposed Fe(III) atom.</text>
</comment>
<comment type="pathway">
    <text evidence="1">Nitrogen metabolism.</text>
</comment>
<comment type="subunit">
    <text evidence="1">Homodimer.</text>
</comment>
<comment type="domain">
    <text evidence="1">Forms a 10-stranded antiparallel beta-barrel structure able to accommodate a hydrophobic ligand in its interior. In fact, this fold hosts the heme group, which is located in a wide surface cleft.</text>
</comment>
<comment type="similarity">
    <text evidence="1">Belongs to the nitrobindin family.</text>
</comment>
<organism>
    <name type="scientific">Pseudarthrobacter chlorophenolicus (strain ATCC 700700 / DSM 12829 / CIP 107037 / JCM 12360 / KCTC 9906 / NCIMB 13794 / A6)</name>
    <name type="common">Arthrobacter chlorophenolicus</name>
    <dbReference type="NCBI Taxonomy" id="452863"/>
    <lineage>
        <taxon>Bacteria</taxon>
        <taxon>Bacillati</taxon>
        <taxon>Actinomycetota</taxon>
        <taxon>Actinomycetes</taxon>
        <taxon>Micrococcales</taxon>
        <taxon>Micrococcaceae</taxon>
        <taxon>Pseudarthrobacter</taxon>
    </lineage>
</organism>
<keyword id="KW-0349">Heme</keyword>
<keyword id="KW-0408">Iron</keyword>
<keyword id="KW-0413">Isomerase</keyword>
<keyword id="KW-0479">Metal-binding</keyword>
<sequence length="202" mass="22032">MPIEIPTDLTPELVPLSWLIGEWEGRGRLGTGDEDSEHFLQHVSFTHNGLPYLQYRAESWLTDDDGTRLRPLTVETGFWALERKQLDADGGPGLVPADIVPALKSADEVEALRNSEGGFDISVSISHPGGISELYYGQIKGPQIQLTTDMVMRGSHSKDYSAATRIFGLVDGNLLWRWDVATGGEAGKGLEAHASAFLARVS</sequence>
<feature type="chain" id="PRO_1000165281" description="Peroxynitrite isomerase">
    <location>
        <begin position="1"/>
        <end position="202"/>
    </location>
</feature>
<feature type="short sequence motif" description="GXWXGXG" evidence="1">
    <location>
        <begin position="21"/>
        <end position="27"/>
    </location>
</feature>
<feature type="binding site" description="axial binding residue" evidence="1">
    <location>
        <position position="193"/>
    </location>
    <ligand>
        <name>heme b</name>
        <dbReference type="ChEBI" id="CHEBI:60344"/>
    </ligand>
    <ligandPart>
        <name>Fe</name>
        <dbReference type="ChEBI" id="CHEBI:18248"/>
    </ligandPart>
</feature>
<protein>
    <recommendedName>
        <fullName>Peroxynitrite isomerase</fullName>
        <ecNumber evidence="1">5.99.-.-</ecNumber>
    </recommendedName>
    <alternativeName>
        <fullName>Ferric nitrobindin</fullName>
        <shortName>Nb(III)</shortName>
    </alternativeName>
</protein>
<gene>
    <name type="ordered locus">Achl_2721</name>
</gene>
<accession>B8HD40</accession>
<evidence type="ECO:0000255" key="1">
    <source>
        <dbReference type="HAMAP-Rule" id="MF_01297"/>
    </source>
</evidence>
<proteinExistence type="inferred from homology"/>
<reference key="1">
    <citation type="submission" date="2009-01" db="EMBL/GenBank/DDBJ databases">
        <title>Complete sequence of chromosome of Arthrobacter chlorophenolicus A6.</title>
        <authorList>
            <consortium name="US DOE Joint Genome Institute"/>
            <person name="Lucas S."/>
            <person name="Copeland A."/>
            <person name="Lapidus A."/>
            <person name="Glavina del Rio T."/>
            <person name="Tice H."/>
            <person name="Bruce D."/>
            <person name="Goodwin L."/>
            <person name="Pitluck S."/>
            <person name="Goltsman E."/>
            <person name="Clum A."/>
            <person name="Larimer F."/>
            <person name="Land M."/>
            <person name="Hauser L."/>
            <person name="Kyrpides N."/>
            <person name="Mikhailova N."/>
            <person name="Jansson J."/>
            <person name="Richardson P."/>
        </authorList>
    </citation>
    <scope>NUCLEOTIDE SEQUENCE [LARGE SCALE GENOMIC DNA]</scope>
    <source>
        <strain>ATCC 700700 / DSM 12829 / CIP 107037 / JCM 12360 / KCTC 9906 / NCIMB 13794 / A6</strain>
    </source>
</reference>